<comment type="function">
    <text evidence="1">One of the primary rRNA binding proteins, this protein initially binds near the 5'-end of the 23S rRNA. It is important during the early stages of 50S assembly. It makes multiple contacts with different domains of the 23S rRNA in the assembled 50S subunit and ribosome.</text>
</comment>
<comment type="function">
    <text evidence="1">Forms part of the polypeptide exit tunnel.</text>
</comment>
<comment type="subunit">
    <text evidence="1">Part of the 50S ribosomal subunit.</text>
</comment>
<comment type="similarity">
    <text evidence="1">Belongs to the universal ribosomal protein uL4 family.</text>
</comment>
<keyword id="KW-0687">Ribonucleoprotein</keyword>
<keyword id="KW-0689">Ribosomal protein</keyword>
<keyword id="KW-0694">RNA-binding</keyword>
<keyword id="KW-0699">rRNA-binding</keyword>
<feature type="chain" id="PRO_1000052369" description="Large ribosomal subunit protein uL4">
    <location>
        <begin position="1"/>
        <end position="206"/>
    </location>
</feature>
<feature type="region of interest" description="Disordered" evidence="2">
    <location>
        <begin position="45"/>
        <end position="85"/>
    </location>
</feature>
<feature type="compositionally biased region" description="Basic residues" evidence="2">
    <location>
        <begin position="58"/>
        <end position="70"/>
    </location>
</feature>
<sequence>MELKLLNSNGQEGAVVNASDVVFGRDYNEALIHQVVVAYQANARQGNRAQKDREQVKHTTKKPWRQKGTGRARAGMSSSPLWRGGGRIFPNSPDENFSHKVNKKMHRAGLCSIFSQLAREGRLSVVEDIVLEAPKTKLLADKFKAMGLDSVLVITDTVDENLYLASRNLPHVAVVEPRYADPLSLIYFKKVLVTKAAVAQIEELLS</sequence>
<organism>
    <name type="scientific">Burkholderia mallei (strain SAVP1)</name>
    <dbReference type="NCBI Taxonomy" id="320388"/>
    <lineage>
        <taxon>Bacteria</taxon>
        <taxon>Pseudomonadati</taxon>
        <taxon>Pseudomonadota</taxon>
        <taxon>Betaproteobacteria</taxon>
        <taxon>Burkholderiales</taxon>
        <taxon>Burkholderiaceae</taxon>
        <taxon>Burkholderia</taxon>
        <taxon>pseudomallei group</taxon>
    </lineage>
</organism>
<proteinExistence type="inferred from homology"/>
<gene>
    <name evidence="1" type="primary">rplD</name>
    <name type="ordered locus">BMASAVP1_A3168</name>
</gene>
<protein>
    <recommendedName>
        <fullName evidence="1">Large ribosomal subunit protein uL4</fullName>
    </recommendedName>
    <alternativeName>
        <fullName evidence="3">50S ribosomal protein L4</fullName>
    </alternativeName>
</protein>
<evidence type="ECO:0000255" key="1">
    <source>
        <dbReference type="HAMAP-Rule" id="MF_01328"/>
    </source>
</evidence>
<evidence type="ECO:0000256" key="2">
    <source>
        <dbReference type="SAM" id="MobiDB-lite"/>
    </source>
</evidence>
<evidence type="ECO:0000305" key="3"/>
<reference key="1">
    <citation type="journal article" date="2010" name="Genome Biol. Evol.">
        <title>Continuing evolution of Burkholderia mallei through genome reduction and large-scale rearrangements.</title>
        <authorList>
            <person name="Losada L."/>
            <person name="Ronning C.M."/>
            <person name="DeShazer D."/>
            <person name="Woods D."/>
            <person name="Fedorova N."/>
            <person name="Kim H.S."/>
            <person name="Shabalina S.A."/>
            <person name="Pearson T.R."/>
            <person name="Brinkac L."/>
            <person name="Tan P."/>
            <person name="Nandi T."/>
            <person name="Crabtree J."/>
            <person name="Badger J."/>
            <person name="Beckstrom-Sternberg S."/>
            <person name="Saqib M."/>
            <person name="Schutzer S.E."/>
            <person name="Keim P."/>
            <person name="Nierman W.C."/>
        </authorList>
    </citation>
    <scope>NUCLEOTIDE SEQUENCE [LARGE SCALE GENOMIC DNA]</scope>
    <source>
        <strain>SAVP1</strain>
    </source>
</reference>
<dbReference type="EMBL" id="CP000526">
    <property type="protein sequence ID" value="ABM50931.1"/>
    <property type="molecule type" value="Genomic_DNA"/>
</dbReference>
<dbReference type="RefSeq" id="WP_004199276.1">
    <property type="nucleotide sequence ID" value="NC_008785.1"/>
</dbReference>
<dbReference type="SMR" id="A1V8A2"/>
<dbReference type="GeneID" id="93061831"/>
<dbReference type="KEGG" id="bmv:BMASAVP1_A3168"/>
<dbReference type="HOGENOM" id="CLU_041575_5_2_4"/>
<dbReference type="GO" id="GO:1990904">
    <property type="term" value="C:ribonucleoprotein complex"/>
    <property type="evidence" value="ECO:0007669"/>
    <property type="project" value="UniProtKB-KW"/>
</dbReference>
<dbReference type="GO" id="GO:0005840">
    <property type="term" value="C:ribosome"/>
    <property type="evidence" value="ECO:0007669"/>
    <property type="project" value="UniProtKB-KW"/>
</dbReference>
<dbReference type="GO" id="GO:0019843">
    <property type="term" value="F:rRNA binding"/>
    <property type="evidence" value="ECO:0007669"/>
    <property type="project" value="UniProtKB-UniRule"/>
</dbReference>
<dbReference type="GO" id="GO:0003735">
    <property type="term" value="F:structural constituent of ribosome"/>
    <property type="evidence" value="ECO:0007669"/>
    <property type="project" value="InterPro"/>
</dbReference>
<dbReference type="GO" id="GO:0006412">
    <property type="term" value="P:translation"/>
    <property type="evidence" value="ECO:0007669"/>
    <property type="project" value="UniProtKB-UniRule"/>
</dbReference>
<dbReference type="Gene3D" id="3.40.1370.10">
    <property type="match status" value="1"/>
</dbReference>
<dbReference type="HAMAP" id="MF_01328_B">
    <property type="entry name" value="Ribosomal_uL4_B"/>
    <property type="match status" value="1"/>
</dbReference>
<dbReference type="InterPro" id="IPR002136">
    <property type="entry name" value="Ribosomal_uL4"/>
</dbReference>
<dbReference type="InterPro" id="IPR013005">
    <property type="entry name" value="Ribosomal_uL4-like"/>
</dbReference>
<dbReference type="InterPro" id="IPR023574">
    <property type="entry name" value="Ribosomal_uL4_dom_sf"/>
</dbReference>
<dbReference type="NCBIfam" id="TIGR03953">
    <property type="entry name" value="rplD_bact"/>
    <property type="match status" value="1"/>
</dbReference>
<dbReference type="PANTHER" id="PTHR10746">
    <property type="entry name" value="50S RIBOSOMAL PROTEIN L4"/>
    <property type="match status" value="1"/>
</dbReference>
<dbReference type="PANTHER" id="PTHR10746:SF6">
    <property type="entry name" value="LARGE RIBOSOMAL SUBUNIT PROTEIN UL4M"/>
    <property type="match status" value="1"/>
</dbReference>
<dbReference type="Pfam" id="PF00573">
    <property type="entry name" value="Ribosomal_L4"/>
    <property type="match status" value="1"/>
</dbReference>
<dbReference type="SUPFAM" id="SSF52166">
    <property type="entry name" value="Ribosomal protein L4"/>
    <property type="match status" value="1"/>
</dbReference>
<accession>A1V8A2</accession>
<name>RL4_BURMS</name>